<organism>
    <name type="scientific">Mytilus galloprovincialis</name>
    <name type="common">Mediterranean mussel</name>
    <dbReference type="NCBI Taxonomy" id="29158"/>
    <lineage>
        <taxon>Eukaryota</taxon>
        <taxon>Metazoa</taxon>
        <taxon>Spiralia</taxon>
        <taxon>Lophotrochozoa</taxon>
        <taxon>Mollusca</taxon>
        <taxon>Bivalvia</taxon>
        <taxon>Autobranchia</taxon>
        <taxon>Pteriomorphia</taxon>
        <taxon>Mytilida</taxon>
        <taxon>Mytiloidea</taxon>
        <taxon>Mytilidae</taxon>
        <taxon>Mytilinae</taxon>
        <taxon>Mytilus</taxon>
    </lineage>
</organism>
<feature type="initiator methionine" description="Removed" evidence="1">
    <location>
        <position position="1"/>
    </location>
</feature>
<feature type="chain" id="PRO_0000158334" description="Histone H4">
    <location>
        <begin position="2"/>
        <end position="103"/>
    </location>
</feature>
<feature type="DNA-binding region">
    <location>
        <begin position="17"/>
        <end position="21"/>
    </location>
</feature>
<feature type="region of interest" description="Disordered" evidence="3">
    <location>
        <begin position="1"/>
        <end position="20"/>
    </location>
</feature>
<feature type="compositionally biased region" description="Gly residues" evidence="3">
    <location>
        <begin position="1"/>
        <end position="14"/>
    </location>
</feature>
<feature type="modified residue" description="N-acetylserine" evidence="1">
    <location>
        <position position="2"/>
    </location>
</feature>
<feature type="modified residue" description="N6-acetyl-N6-methyllysine; alternate" evidence="2">
    <location>
        <position position="6"/>
    </location>
</feature>
<feature type="modified residue" description="N6-acetyl-N6-methyllysine; alternate" evidence="2">
    <location>
        <position position="13"/>
    </location>
</feature>
<feature type="modified residue" description="N6-acetyllysine" evidence="1">
    <location>
        <position position="17"/>
    </location>
</feature>
<feature type="modified residue" description="N6-methyllysine" evidence="1">
    <location>
        <position position="21"/>
    </location>
</feature>
<accession>Q6WV90</accession>
<sequence>MSGRGKGGKGLGKGGAKRHRKVLRDNIQGITKPAIRRLARRGGVKRISGLIYEETRGVLKVFLENVIRDAVTYTEHAKRKTVTAMDVVYALKRQGRTLYGFGG</sequence>
<name>H4_MYTGA</name>
<evidence type="ECO:0000250" key="1"/>
<evidence type="ECO:0000250" key="2">
    <source>
        <dbReference type="UniProtKB" id="P62805"/>
    </source>
</evidence>
<evidence type="ECO:0000256" key="3">
    <source>
        <dbReference type="SAM" id="MobiDB-lite"/>
    </source>
</evidence>
<evidence type="ECO:0000305" key="4"/>
<proteinExistence type="inferred from homology"/>
<comment type="function">
    <text>Core component of nucleosome. Nucleosomes wrap and compact DNA into chromatin, limiting DNA accessibility to the cellular machineries which require DNA as a template. Histones thereby play a central role in transcription regulation, DNA repair, DNA replication and chromosomal stability. DNA accessibility is regulated via a complex set of post-translational modifications of histones, also called histone code, and nucleosome remodeling.</text>
</comment>
<comment type="subunit">
    <text>The nucleosome is a histone octamer containing two molecules each of H2A, H2B, H3 and H4 assembled in one H3-H4 heterotetramer and two H2A-H2B heterodimers. The octamer wraps approximately 147 bp of DNA.</text>
</comment>
<comment type="subcellular location">
    <subcellularLocation>
        <location evidence="1">Nucleus</location>
    </subcellularLocation>
    <subcellularLocation>
        <location evidence="1">Chromosome</location>
    </subcellularLocation>
</comment>
<comment type="similarity">
    <text evidence="4">Belongs to the histone H4 family.</text>
</comment>
<dbReference type="EMBL" id="AY267739">
    <property type="protein sequence ID" value="AAP94643.1"/>
    <property type="molecule type" value="Genomic_DNA"/>
</dbReference>
<dbReference type="EMBL" id="AY267750">
    <property type="protein sequence ID" value="AAP94669.1"/>
    <property type="molecule type" value="Genomic_DNA"/>
</dbReference>
<dbReference type="SMR" id="Q6WV90"/>
<dbReference type="OrthoDB" id="6101876at2759"/>
<dbReference type="PhylomeDB" id="Q6WV90"/>
<dbReference type="GO" id="GO:0000786">
    <property type="term" value="C:nucleosome"/>
    <property type="evidence" value="ECO:0007669"/>
    <property type="project" value="UniProtKB-KW"/>
</dbReference>
<dbReference type="GO" id="GO:0005634">
    <property type="term" value="C:nucleus"/>
    <property type="evidence" value="ECO:0007669"/>
    <property type="project" value="UniProtKB-SubCell"/>
</dbReference>
<dbReference type="GO" id="GO:0003677">
    <property type="term" value="F:DNA binding"/>
    <property type="evidence" value="ECO:0007669"/>
    <property type="project" value="UniProtKB-KW"/>
</dbReference>
<dbReference type="GO" id="GO:0046982">
    <property type="term" value="F:protein heterodimerization activity"/>
    <property type="evidence" value="ECO:0007669"/>
    <property type="project" value="InterPro"/>
</dbReference>
<dbReference type="GO" id="GO:0030527">
    <property type="term" value="F:structural constituent of chromatin"/>
    <property type="evidence" value="ECO:0007669"/>
    <property type="project" value="InterPro"/>
</dbReference>
<dbReference type="CDD" id="cd22912">
    <property type="entry name" value="HFD_H4"/>
    <property type="match status" value="1"/>
</dbReference>
<dbReference type="FunFam" id="1.10.20.10:FF:000002">
    <property type="entry name" value="Histone H4"/>
    <property type="match status" value="1"/>
</dbReference>
<dbReference type="Gene3D" id="1.10.20.10">
    <property type="entry name" value="Histone, subunit A"/>
    <property type="match status" value="1"/>
</dbReference>
<dbReference type="InterPro" id="IPR035425">
    <property type="entry name" value="CENP-T/H4_C"/>
</dbReference>
<dbReference type="InterPro" id="IPR009072">
    <property type="entry name" value="Histone-fold"/>
</dbReference>
<dbReference type="InterPro" id="IPR001951">
    <property type="entry name" value="Histone_H4"/>
</dbReference>
<dbReference type="InterPro" id="IPR019809">
    <property type="entry name" value="Histone_H4_CS"/>
</dbReference>
<dbReference type="InterPro" id="IPR004823">
    <property type="entry name" value="TAF_TATA-bd_Histone-like_dom"/>
</dbReference>
<dbReference type="PANTHER" id="PTHR10484">
    <property type="entry name" value="HISTONE H4"/>
    <property type="match status" value="1"/>
</dbReference>
<dbReference type="Pfam" id="PF15511">
    <property type="entry name" value="CENP-T_C"/>
    <property type="match status" value="1"/>
</dbReference>
<dbReference type="PRINTS" id="PR00623">
    <property type="entry name" value="HISTONEH4"/>
</dbReference>
<dbReference type="SMART" id="SM00417">
    <property type="entry name" value="H4"/>
    <property type="match status" value="1"/>
</dbReference>
<dbReference type="SMART" id="SM00803">
    <property type="entry name" value="TAF"/>
    <property type="match status" value="1"/>
</dbReference>
<dbReference type="SUPFAM" id="SSF47113">
    <property type="entry name" value="Histone-fold"/>
    <property type="match status" value="1"/>
</dbReference>
<dbReference type="PROSITE" id="PS00047">
    <property type="entry name" value="HISTONE_H4"/>
    <property type="match status" value="1"/>
</dbReference>
<reference key="1">
    <citation type="journal article" date="2004" name="J. Mol. Evol.">
        <title>Molecular evolutionary characterization of the mussel Mytilus histone multigene family: first record of a tandemly repeated unit of five histone genes containing an H1 subtype with 'orphon' features.</title>
        <authorList>
            <person name="Eirin-Lopez J.M."/>
            <person name="Ruiz F."/>
            <person name="Gonzalez-Tizon A.M."/>
            <person name="Martinez A."/>
            <person name="Sanchez L."/>
            <person name="Mendez J."/>
        </authorList>
    </citation>
    <scope>NUCLEOTIDE SEQUENCE [GENOMIC DNA]</scope>
</reference>
<keyword id="KW-0007">Acetylation</keyword>
<keyword id="KW-0158">Chromosome</keyword>
<keyword id="KW-0238">DNA-binding</keyword>
<keyword id="KW-0488">Methylation</keyword>
<keyword id="KW-0544">Nucleosome core</keyword>
<keyword id="KW-0539">Nucleus</keyword>
<protein>
    <recommendedName>
        <fullName>Histone H4</fullName>
    </recommendedName>
</protein>